<comment type="function">
    <text>Hydrolyzes both carbenicillin and oxacillin.</text>
</comment>
<comment type="catalytic activity">
    <reaction evidence="3">
        <text>a beta-lactam + H2O = a substituted beta-amino acid</text>
        <dbReference type="Rhea" id="RHEA:20401"/>
        <dbReference type="ChEBI" id="CHEBI:15377"/>
        <dbReference type="ChEBI" id="CHEBI:35627"/>
        <dbReference type="ChEBI" id="CHEBI:140347"/>
        <dbReference type="EC" id="3.5.2.6"/>
    </reaction>
</comment>
<comment type="miscellaneous">
    <text evidence="5">The class A beta-lactamase family has a specific amino-acid numbering system, sometimes called Ambler or ABL numbering and often misspelt as Amber. A multiple sequence alignment was used to derive a consensus sequence and then the consensus was numbered taking into account insertions and deletions. This allows use of identical numbers, e.g. for active site residues, despite differences in protein length. UniProt always uses natural numbering of residues, hence there appear to be differences in numbering between this entry and some papers.</text>
</comment>
<comment type="similarity">
    <text evidence="4">Belongs to the class-A beta-lactamase family.</text>
</comment>
<comment type="sequence caution" evidence="4">
    <conflict type="erroneous initiation">
        <sequence resource="EMBL-CDS" id="AAA25979"/>
    </conflict>
</comment>
<feature type="signal peptide" evidence="2">
    <location>
        <begin position="1"/>
        <end position="17"/>
    </location>
</feature>
<feature type="chain" id="PRO_0000017047" description="Beta-lactamase PSE-4">
    <location>
        <begin position="18"/>
        <end position="288"/>
    </location>
</feature>
<feature type="active site" description="Acyl-ester intermediate">
    <location>
        <position position="65"/>
    </location>
</feature>
<feature type="binding site">
    <location>
        <begin position="229"/>
        <end position="231"/>
    </location>
    <ligand>
        <name>substrate</name>
    </ligand>
</feature>
<feature type="disulfide bond" evidence="1">
    <location>
        <begin position="72"/>
        <end position="118"/>
    </location>
</feature>
<feature type="helix" evidence="6">
    <location>
        <begin position="23"/>
        <end position="35"/>
    </location>
</feature>
<feature type="strand" evidence="6">
    <location>
        <begin position="39"/>
        <end position="46"/>
    </location>
</feature>
<feature type="turn" evidence="6">
    <location>
        <begin position="47"/>
        <end position="50"/>
    </location>
</feature>
<feature type="strand" evidence="6">
    <location>
        <begin position="51"/>
        <end position="56"/>
    </location>
</feature>
<feature type="helix" evidence="8">
    <location>
        <begin position="64"/>
        <end position="66"/>
    </location>
</feature>
<feature type="helix" evidence="6">
    <location>
        <begin position="68"/>
        <end position="80"/>
    </location>
</feature>
<feature type="strand" evidence="6">
    <location>
        <begin position="89"/>
        <end position="91"/>
    </location>
</feature>
<feature type="helix" evidence="6">
    <location>
        <begin position="94"/>
        <end position="96"/>
    </location>
</feature>
<feature type="helix" evidence="6">
    <location>
        <begin position="104"/>
        <end position="106"/>
    </location>
</feature>
<feature type="strand" evidence="6">
    <location>
        <begin position="110"/>
        <end position="113"/>
    </location>
</feature>
<feature type="helix" evidence="6">
    <location>
        <begin position="114"/>
        <end position="124"/>
    </location>
</feature>
<feature type="helix" evidence="6">
    <location>
        <begin position="127"/>
        <end position="136"/>
    </location>
</feature>
<feature type="helix" evidence="7">
    <location>
        <begin position="145"/>
        <end position="149"/>
    </location>
</feature>
<feature type="helix" evidence="7">
    <location>
        <begin position="163"/>
        <end position="165"/>
    </location>
</feature>
<feature type="helix" evidence="7">
    <location>
        <begin position="178"/>
        <end position="185"/>
    </location>
</feature>
<feature type="strand" evidence="6">
    <location>
        <begin position="191"/>
        <end position="194"/>
    </location>
</feature>
<feature type="helix" evidence="6">
    <location>
        <begin position="196"/>
        <end position="207"/>
    </location>
</feature>
<feature type="turn" evidence="6">
    <location>
        <begin position="213"/>
        <end position="215"/>
    </location>
</feature>
<feature type="helix" evidence="6">
    <location>
        <begin position="216"/>
        <end position="219"/>
    </location>
</feature>
<feature type="strand" evidence="6">
    <location>
        <begin position="225"/>
        <end position="232"/>
    </location>
</feature>
<feature type="helix" evidence="6">
    <location>
        <begin position="234"/>
        <end position="236"/>
    </location>
</feature>
<feature type="strand" evidence="6">
    <location>
        <begin position="238"/>
        <end position="246"/>
    </location>
</feature>
<feature type="strand" evidence="6">
    <location>
        <begin position="249"/>
        <end position="260"/>
    </location>
</feature>
<feature type="helix" evidence="6">
    <location>
        <begin position="265"/>
        <end position="284"/>
    </location>
</feature>
<sequence>MKFLLAFSLLIPSVVFASSSKFQQVEQDVKAIEVSLSARIGVSVLDTQNGEYWDYNGNQRFPLTSTFKTIACAKLLYDAEQGKVNPNSTVEIKKADLVTYSPVIEKQVGQAITLDDACFATMTTSDNTAANIILSAVGGPKGVTDFLRQIGDKETRLDRIEPDLNEGKLGDLRDTTTPKAIASTLNKFLFGSALSEMNQKKLESWMVNNQVTGNLLRSVLPAGWNIADRSGAGGFGARSITAVVWSEHQAPIIVSIYLAQTQASMEERNDAIVKIGHSIFDVYTSQSR</sequence>
<gene>
    <name type="primary">pse4</name>
    <name type="synonym">carB1</name>
</gene>
<dbReference type="EC" id="3.5.2.6"/>
<dbReference type="EMBL" id="J05162">
    <property type="protein sequence ID" value="AAA25979.1"/>
    <property type="status" value="ALT_INIT"/>
    <property type="molecule type" value="Genomic_DNA"/>
</dbReference>
<dbReference type="PIR" id="A35001">
    <property type="entry name" value="A35001"/>
</dbReference>
<dbReference type="RefSeq" id="WP_063857835.1">
    <property type="nucleotide sequence ID" value="NG_048713.1"/>
</dbReference>
<dbReference type="PDB" id="1G68">
    <property type="method" value="X-ray"/>
    <property type="resolution" value="1.95 A"/>
    <property type="chains" value="A=18-288"/>
</dbReference>
<dbReference type="PDB" id="1G6A">
    <property type="method" value="X-ray"/>
    <property type="resolution" value="1.75 A"/>
    <property type="chains" value="A=18-288"/>
</dbReference>
<dbReference type="PDB" id="4ID4">
    <property type="method" value="X-ray"/>
    <property type="resolution" value="1.05 A"/>
    <property type="chains" value="A=145-185"/>
</dbReference>
<dbReference type="PDB" id="4R4R">
    <property type="method" value="X-ray"/>
    <property type="resolution" value="1.20 A"/>
    <property type="chains" value="A=145-185"/>
</dbReference>
<dbReference type="PDB" id="8J6Y">
    <property type="method" value="X-ray"/>
    <property type="resolution" value="2.40 A"/>
    <property type="chains" value="A=1-288"/>
</dbReference>
<dbReference type="PDBsum" id="1G68"/>
<dbReference type="PDBsum" id="1G6A"/>
<dbReference type="PDBsum" id="4ID4"/>
<dbReference type="PDBsum" id="4R4R"/>
<dbReference type="PDBsum" id="8J6Y"/>
<dbReference type="BMRB" id="P16897"/>
<dbReference type="SMR" id="P16897"/>
<dbReference type="ChEMBL" id="CHEMBL1744489"/>
<dbReference type="CARD" id="ARO:3002240">
    <property type="molecule name" value="CARB-1"/>
    <property type="mechanism identifier" value="ARO:0001004"/>
    <property type="mechanism name" value="antibiotic inactivation"/>
</dbReference>
<dbReference type="BRENDA" id="3.5.2.6">
    <property type="organism ID" value="5087"/>
</dbReference>
<dbReference type="SABIO-RK" id="P16897"/>
<dbReference type="EvolutionaryTrace" id="P16897"/>
<dbReference type="GO" id="GO:0008800">
    <property type="term" value="F:beta-lactamase activity"/>
    <property type="evidence" value="ECO:0007669"/>
    <property type="project" value="UniProtKB-EC"/>
</dbReference>
<dbReference type="GO" id="GO:0030655">
    <property type="term" value="P:beta-lactam antibiotic catabolic process"/>
    <property type="evidence" value="ECO:0007669"/>
    <property type="project" value="InterPro"/>
</dbReference>
<dbReference type="GO" id="GO:0046677">
    <property type="term" value="P:response to antibiotic"/>
    <property type="evidence" value="ECO:0007669"/>
    <property type="project" value="UniProtKB-KW"/>
</dbReference>
<dbReference type="Gene3D" id="3.40.710.10">
    <property type="entry name" value="DD-peptidase/beta-lactamase superfamily"/>
    <property type="match status" value="1"/>
</dbReference>
<dbReference type="InterPro" id="IPR012338">
    <property type="entry name" value="Beta-lactam/transpept-like"/>
</dbReference>
<dbReference type="InterPro" id="IPR045155">
    <property type="entry name" value="Beta-lactam_cat"/>
</dbReference>
<dbReference type="InterPro" id="IPR000871">
    <property type="entry name" value="Beta-lactam_class-A"/>
</dbReference>
<dbReference type="InterPro" id="IPR023650">
    <property type="entry name" value="Beta-lactam_class-A_AS"/>
</dbReference>
<dbReference type="NCBIfam" id="NF033103">
    <property type="entry name" value="bla_class_A"/>
    <property type="match status" value="1"/>
</dbReference>
<dbReference type="NCBIfam" id="NF000481">
    <property type="entry name" value="carbeni_gen"/>
    <property type="match status" value="1"/>
</dbReference>
<dbReference type="NCBIfam" id="NF000480">
    <property type="entry name" value="PSE"/>
    <property type="match status" value="1"/>
</dbReference>
<dbReference type="PANTHER" id="PTHR35333">
    <property type="entry name" value="BETA-LACTAMASE"/>
    <property type="match status" value="1"/>
</dbReference>
<dbReference type="PANTHER" id="PTHR35333:SF3">
    <property type="entry name" value="BETA-LACTAMASE-TYPE TRANSPEPTIDASE FOLD CONTAINING PROTEIN"/>
    <property type="match status" value="1"/>
</dbReference>
<dbReference type="Pfam" id="PF13354">
    <property type="entry name" value="Beta-lactamase2"/>
    <property type="match status" value="1"/>
</dbReference>
<dbReference type="PRINTS" id="PR00118">
    <property type="entry name" value="BLACTAMASEA"/>
</dbReference>
<dbReference type="SUPFAM" id="SSF56601">
    <property type="entry name" value="beta-lactamase/transpeptidase-like"/>
    <property type="match status" value="1"/>
</dbReference>
<dbReference type="PROSITE" id="PS00146">
    <property type="entry name" value="BETA_LACTAMASE_A"/>
    <property type="match status" value="1"/>
</dbReference>
<evidence type="ECO:0000250" key="1"/>
<evidence type="ECO:0000255" key="2"/>
<evidence type="ECO:0000255" key="3">
    <source>
        <dbReference type="PROSITE-ProRule" id="PRU10101"/>
    </source>
</evidence>
<evidence type="ECO:0000305" key="4"/>
<evidence type="ECO:0000305" key="5">
    <source>
    </source>
</evidence>
<evidence type="ECO:0007829" key="6">
    <source>
        <dbReference type="PDB" id="1G6A"/>
    </source>
</evidence>
<evidence type="ECO:0007829" key="7">
    <source>
        <dbReference type="PDB" id="4ID4"/>
    </source>
</evidence>
<evidence type="ECO:0007829" key="8">
    <source>
        <dbReference type="PDB" id="4R4R"/>
    </source>
</evidence>
<reference key="1">
    <citation type="journal article" date="1990" name="J. Biol. Chem.">
        <title>Nucleotide sequence of the PSE-4 carbenicillinase gene and correlations with the Staphylococcus aureus PC1 beta-lactamase crystal structure.</title>
        <authorList>
            <person name="Boissinot M."/>
            <person name="Levesque R.C."/>
        </authorList>
    </citation>
    <scope>NUCLEOTIDE SEQUENCE [GENOMIC DNA]</scope>
    <source>
        <strain>Dalgleish</strain>
        <transposon>Tn1405</transposon>
    </source>
</reference>
<reference key="2">
    <citation type="journal article" date="1991" name="Biochem. J.">
        <title>A standard numbering scheme for the class A beta-lactamases.</title>
        <authorList>
            <person name="Ambler R.P."/>
            <person name="Coulson A.F."/>
            <person name="Frere J.M."/>
            <person name="Ghuysen J.M."/>
            <person name="Joris B."/>
            <person name="Forsman M."/>
            <person name="Levesque R.C."/>
            <person name="Tiraby G."/>
            <person name="Waley S.G."/>
        </authorList>
    </citation>
    <scope>AMINO ACID NUMBERING SCHEME</scope>
</reference>
<accession>P16897</accession>
<keyword id="KW-0002">3D-structure</keyword>
<keyword id="KW-0046">Antibiotic resistance</keyword>
<keyword id="KW-1015">Disulfide bond</keyword>
<keyword id="KW-0378">Hydrolase</keyword>
<keyword id="KW-0732">Signal</keyword>
<keyword id="KW-0814">Transposable element</keyword>
<protein>
    <recommendedName>
        <fullName>Beta-lactamase PSE-4</fullName>
        <ecNumber>3.5.2.6</ecNumber>
    </recommendedName>
    <alternativeName>
        <fullName>Beta-lactamase CARB-1</fullName>
    </alternativeName>
    <alternativeName>
        <fullName>Carbenicillinase 1</fullName>
    </alternativeName>
</protein>
<proteinExistence type="evidence at protein level"/>
<name>BLP4_PSEAI</name>
<organism>
    <name type="scientific">Pseudomonas aeruginosa</name>
    <dbReference type="NCBI Taxonomy" id="287"/>
    <lineage>
        <taxon>Bacteria</taxon>
        <taxon>Pseudomonadati</taxon>
        <taxon>Pseudomonadota</taxon>
        <taxon>Gammaproteobacteria</taxon>
        <taxon>Pseudomonadales</taxon>
        <taxon>Pseudomonadaceae</taxon>
        <taxon>Pseudomonas</taxon>
    </lineage>
</organism>